<comment type="function">
    <text evidence="2">Component of the ubiquinol-cytochrome c reductase complex (complex III or cytochrome b-c1 complex) that is part of the mitochondrial respiratory chain. The b-c1 complex mediates electron transfer from ubiquinol to cytochrome c. Contributes to the generation of a proton gradient across the mitochondrial membrane that is then used for ATP synthesis.</text>
</comment>
<comment type="cofactor">
    <cofactor evidence="2">
        <name>heme b</name>
        <dbReference type="ChEBI" id="CHEBI:60344"/>
    </cofactor>
    <text evidence="2">Binds 2 heme b groups non-covalently.</text>
</comment>
<comment type="subunit">
    <text evidence="2">The cytochrome bc1 complex contains 11 subunits: 3 respiratory subunits (MT-CYB, CYC1 and UQCRFS1), 2 core proteins (UQCRC1 and UQCRC2) and 6 low-molecular weight proteins (UQCRH/QCR6, UQCRB/QCR7, UQCRQ/QCR8, UQCR10/QCR9, UQCR11/QCR10 and a cleavage product of UQCRFS1). This cytochrome bc1 complex then forms a dimer.</text>
</comment>
<comment type="subcellular location">
    <subcellularLocation>
        <location evidence="2">Mitochondrion inner membrane</location>
        <topology evidence="2">Multi-pass membrane protein</topology>
    </subcellularLocation>
</comment>
<comment type="miscellaneous">
    <text evidence="1">Heme 1 (or BL or b562) is low-potential and absorbs at about 562 nm, and heme 2 (or BH or b566) is high-potential and absorbs at about 566 nm.</text>
</comment>
<comment type="similarity">
    <text evidence="3 4">Belongs to the cytochrome b family.</text>
</comment>
<comment type="caution">
    <text evidence="2">The full-length protein contains only eight transmembrane helices, not nine as predicted by bioinformatics tools.</text>
</comment>
<dbReference type="EMBL" id="AF160602">
    <property type="protein sequence ID" value="AAF15218.1"/>
    <property type="molecule type" value="Genomic_DNA"/>
</dbReference>
<dbReference type="SMR" id="Q9T7P0"/>
<dbReference type="GO" id="GO:0005743">
    <property type="term" value="C:mitochondrial inner membrane"/>
    <property type="evidence" value="ECO:0007669"/>
    <property type="project" value="UniProtKB-SubCell"/>
</dbReference>
<dbReference type="GO" id="GO:0045275">
    <property type="term" value="C:respiratory chain complex III"/>
    <property type="evidence" value="ECO:0007669"/>
    <property type="project" value="InterPro"/>
</dbReference>
<dbReference type="GO" id="GO:0046872">
    <property type="term" value="F:metal ion binding"/>
    <property type="evidence" value="ECO:0007669"/>
    <property type="project" value="UniProtKB-KW"/>
</dbReference>
<dbReference type="GO" id="GO:0008121">
    <property type="term" value="F:ubiquinol-cytochrome-c reductase activity"/>
    <property type="evidence" value="ECO:0007669"/>
    <property type="project" value="InterPro"/>
</dbReference>
<dbReference type="GO" id="GO:0006122">
    <property type="term" value="P:mitochondrial electron transport, ubiquinol to cytochrome c"/>
    <property type="evidence" value="ECO:0007669"/>
    <property type="project" value="TreeGrafter"/>
</dbReference>
<dbReference type="CDD" id="cd00290">
    <property type="entry name" value="cytochrome_b_C"/>
    <property type="match status" value="1"/>
</dbReference>
<dbReference type="CDD" id="cd00284">
    <property type="entry name" value="Cytochrome_b_N"/>
    <property type="match status" value="1"/>
</dbReference>
<dbReference type="FunFam" id="1.20.810.10:FF:000002">
    <property type="entry name" value="Cytochrome b"/>
    <property type="match status" value="1"/>
</dbReference>
<dbReference type="Gene3D" id="1.20.810.10">
    <property type="entry name" value="Cytochrome Bc1 Complex, Chain C"/>
    <property type="match status" value="1"/>
</dbReference>
<dbReference type="InterPro" id="IPR005798">
    <property type="entry name" value="Cyt_b/b6_C"/>
</dbReference>
<dbReference type="InterPro" id="IPR036150">
    <property type="entry name" value="Cyt_b/b6_C_sf"/>
</dbReference>
<dbReference type="InterPro" id="IPR005797">
    <property type="entry name" value="Cyt_b/b6_N"/>
</dbReference>
<dbReference type="InterPro" id="IPR027387">
    <property type="entry name" value="Cytb/b6-like_sf"/>
</dbReference>
<dbReference type="InterPro" id="IPR030689">
    <property type="entry name" value="Cytochrome_b"/>
</dbReference>
<dbReference type="InterPro" id="IPR048260">
    <property type="entry name" value="Cytochrome_b_C_euk/bac"/>
</dbReference>
<dbReference type="InterPro" id="IPR048259">
    <property type="entry name" value="Cytochrome_b_N_euk/bac"/>
</dbReference>
<dbReference type="InterPro" id="IPR016174">
    <property type="entry name" value="Di-haem_cyt_TM"/>
</dbReference>
<dbReference type="PANTHER" id="PTHR19271">
    <property type="entry name" value="CYTOCHROME B"/>
    <property type="match status" value="1"/>
</dbReference>
<dbReference type="PANTHER" id="PTHR19271:SF16">
    <property type="entry name" value="CYTOCHROME B"/>
    <property type="match status" value="1"/>
</dbReference>
<dbReference type="Pfam" id="PF00032">
    <property type="entry name" value="Cytochrom_B_C"/>
    <property type="match status" value="1"/>
</dbReference>
<dbReference type="Pfam" id="PF00033">
    <property type="entry name" value="Cytochrome_B"/>
    <property type="match status" value="1"/>
</dbReference>
<dbReference type="PIRSF" id="PIRSF038885">
    <property type="entry name" value="COB"/>
    <property type="match status" value="1"/>
</dbReference>
<dbReference type="SUPFAM" id="SSF81648">
    <property type="entry name" value="a domain/subunit of cytochrome bc1 complex (Ubiquinol-cytochrome c reductase)"/>
    <property type="match status" value="1"/>
</dbReference>
<dbReference type="SUPFAM" id="SSF81342">
    <property type="entry name" value="Transmembrane di-heme cytochromes"/>
    <property type="match status" value="1"/>
</dbReference>
<dbReference type="PROSITE" id="PS51003">
    <property type="entry name" value="CYTB_CTER"/>
    <property type="match status" value="1"/>
</dbReference>
<dbReference type="PROSITE" id="PS51002">
    <property type="entry name" value="CYTB_NTER"/>
    <property type="match status" value="1"/>
</dbReference>
<sequence>MTNLRKSHPLMKIVNHTFIDLPTPSSISAWWNFGSLLGICLLLQILTGLFLAMHYSSDTSTAFSSVAHICRDVNYGWLIRYLHANGASMFFICLFLHIGRGTYYGSYTLSETWNIGILLVFSTMATAFLGYVLPWGQMSFWGATVITNLLSAIPYIGTTLVEWIWGGFSVDKATLSRFFAFHFIMPFIITALVMVHLLFLHETGSNNPTGLNSNADKIPFHPYYTIKDILGFVLLCFILLSLTLFTPDLLGDPDNYTPANPLNTPPHIKPEWYFLFAYAILRSIPNKLGGVIALILSILILIILPLLHTSPLRSLTFRPFSQCLFWILVADLITLTWIGGQPVEHPFIIIGQAASILYFSIFLILMPLAGILENKIMKM</sequence>
<reference key="1">
    <citation type="journal article" date="1999" name="Cladistics">
        <title>Molecular phylogeny and biogeography of Madagascar's native rodents (Muridae: Nesomyinae): a test of the single origin hypothesis.</title>
        <authorList>
            <person name="Jansa S.A."/>
            <person name="Goodman S.M."/>
            <person name="Tucker P.K."/>
        </authorList>
    </citation>
    <scope>NUCLEOTIDE SEQUENCE [GENOMIC DNA]</scope>
</reference>
<protein>
    <recommendedName>
        <fullName>Cytochrome b</fullName>
    </recommendedName>
    <alternativeName>
        <fullName>Complex III subunit 3</fullName>
    </alternativeName>
    <alternativeName>
        <fullName>Complex III subunit III</fullName>
    </alternativeName>
    <alternativeName>
        <fullName>Cytochrome b-c1 complex subunit 3</fullName>
    </alternativeName>
    <alternativeName>
        <fullName>Ubiquinol-cytochrome-c reductase complex cytochrome b subunit</fullName>
    </alternativeName>
</protein>
<accession>Q9T7P0</accession>
<feature type="chain" id="PRO_0000254967" description="Cytochrome b">
    <location>
        <begin position="1"/>
        <end position="379"/>
    </location>
</feature>
<feature type="transmembrane region" description="Helical" evidence="2">
    <location>
        <begin position="33"/>
        <end position="53"/>
    </location>
</feature>
<feature type="transmembrane region" description="Helical" evidence="2">
    <location>
        <begin position="77"/>
        <end position="98"/>
    </location>
</feature>
<feature type="transmembrane region" description="Helical" evidence="2">
    <location>
        <begin position="113"/>
        <end position="133"/>
    </location>
</feature>
<feature type="transmembrane region" description="Helical" evidence="2">
    <location>
        <begin position="178"/>
        <end position="198"/>
    </location>
</feature>
<feature type="transmembrane region" description="Helical" evidence="2">
    <location>
        <begin position="226"/>
        <end position="246"/>
    </location>
</feature>
<feature type="transmembrane region" description="Helical" evidence="2">
    <location>
        <begin position="288"/>
        <end position="308"/>
    </location>
</feature>
<feature type="transmembrane region" description="Helical" evidence="2">
    <location>
        <begin position="320"/>
        <end position="340"/>
    </location>
</feature>
<feature type="transmembrane region" description="Helical" evidence="2">
    <location>
        <begin position="347"/>
        <end position="367"/>
    </location>
</feature>
<feature type="binding site" description="axial binding residue" evidence="2">
    <location>
        <position position="83"/>
    </location>
    <ligand>
        <name>heme b</name>
        <dbReference type="ChEBI" id="CHEBI:60344"/>
        <label>b562</label>
    </ligand>
    <ligandPart>
        <name>Fe</name>
        <dbReference type="ChEBI" id="CHEBI:18248"/>
    </ligandPart>
</feature>
<feature type="binding site" description="axial binding residue" evidence="2">
    <location>
        <position position="97"/>
    </location>
    <ligand>
        <name>heme b</name>
        <dbReference type="ChEBI" id="CHEBI:60344"/>
        <label>b566</label>
    </ligand>
    <ligandPart>
        <name>Fe</name>
        <dbReference type="ChEBI" id="CHEBI:18248"/>
    </ligandPart>
</feature>
<feature type="binding site" description="axial binding residue" evidence="2">
    <location>
        <position position="182"/>
    </location>
    <ligand>
        <name>heme b</name>
        <dbReference type="ChEBI" id="CHEBI:60344"/>
        <label>b562</label>
    </ligand>
    <ligandPart>
        <name>Fe</name>
        <dbReference type="ChEBI" id="CHEBI:18248"/>
    </ligandPart>
</feature>
<feature type="binding site" description="axial binding residue" evidence="2">
    <location>
        <position position="196"/>
    </location>
    <ligand>
        <name>heme b</name>
        <dbReference type="ChEBI" id="CHEBI:60344"/>
        <label>b566</label>
    </ligand>
    <ligandPart>
        <name>Fe</name>
        <dbReference type="ChEBI" id="CHEBI:18248"/>
    </ligandPart>
</feature>
<feature type="binding site" evidence="2">
    <location>
        <position position="201"/>
    </location>
    <ligand>
        <name>a ubiquinone</name>
        <dbReference type="ChEBI" id="CHEBI:16389"/>
    </ligand>
</feature>
<geneLocation type="mitochondrion"/>
<name>CYB_TACSP</name>
<evidence type="ECO:0000250" key="1"/>
<evidence type="ECO:0000250" key="2">
    <source>
        <dbReference type="UniProtKB" id="P00157"/>
    </source>
</evidence>
<evidence type="ECO:0000255" key="3">
    <source>
        <dbReference type="PROSITE-ProRule" id="PRU00967"/>
    </source>
</evidence>
<evidence type="ECO:0000255" key="4">
    <source>
        <dbReference type="PROSITE-ProRule" id="PRU00968"/>
    </source>
</evidence>
<organism>
    <name type="scientific">Tachyoryctes splendens</name>
    <name type="common">East African mole rat</name>
    <dbReference type="NCBI Taxonomy" id="49445"/>
    <lineage>
        <taxon>Eukaryota</taxon>
        <taxon>Metazoa</taxon>
        <taxon>Chordata</taxon>
        <taxon>Craniata</taxon>
        <taxon>Vertebrata</taxon>
        <taxon>Euteleostomi</taxon>
        <taxon>Mammalia</taxon>
        <taxon>Eutheria</taxon>
        <taxon>Euarchontoglires</taxon>
        <taxon>Glires</taxon>
        <taxon>Rodentia</taxon>
        <taxon>Myomorpha</taxon>
        <taxon>Muroidea</taxon>
        <taxon>Spalacidae</taxon>
        <taxon>Rhizomyinae</taxon>
        <taxon>Tachyoryctes</taxon>
    </lineage>
</organism>
<keyword id="KW-0249">Electron transport</keyword>
<keyword id="KW-0349">Heme</keyword>
<keyword id="KW-0408">Iron</keyword>
<keyword id="KW-0472">Membrane</keyword>
<keyword id="KW-0479">Metal-binding</keyword>
<keyword id="KW-0496">Mitochondrion</keyword>
<keyword id="KW-0999">Mitochondrion inner membrane</keyword>
<keyword id="KW-0679">Respiratory chain</keyword>
<keyword id="KW-0812">Transmembrane</keyword>
<keyword id="KW-1133">Transmembrane helix</keyword>
<keyword id="KW-0813">Transport</keyword>
<keyword id="KW-0830">Ubiquinone</keyword>
<proteinExistence type="inferred from homology"/>
<gene>
    <name type="primary">MT-CYB</name>
    <name type="synonym">COB</name>
    <name type="synonym">CYTB</name>
    <name type="synonym">MTCYB</name>
</gene>